<protein>
    <recommendedName>
        <fullName evidence="1">Small ribosomal subunit protein uS8</fullName>
    </recommendedName>
    <alternativeName>
        <fullName evidence="2">30S ribosomal protein S8</fullName>
    </alternativeName>
</protein>
<dbReference type="EMBL" id="BX908798">
    <property type="protein sequence ID" value="CAF23149.1"/>
    <property type="molecule type" value="Genomic_DNA"/>
</dbReference>
<dbReference type="RefSeq" id="WP_011174975.1">
    <property type="nucleotide sequence ID" value="NC_005861.2"/>
</dbReference>
<dbReference type="SMR" id="Q6ME50"/>
<dbReference type="STRING" id="264201.pc0425"/>
<dbReference type="KEGG" id="pcu:PC_RS02075"/>
<dbReference type="eggNOG" id="COG0096">
    <property type="taxonomic scope" value="Bacteria"/>
</dbReference>
<dbReference type="HOGENOM" id="CLU_098428_0_2_0"/>
<dbReference type="OrthoDB" id="9802617at2"/>
<dbReference type="Proteomes" id="UP000000529">
    <property type="component" value="Chromosome"/>
</dbReference>
<dbReference type="GO" id="GO:1990904">
    <property type="term" value="C:ribonucleoprotein complex"/>
    <property type="evidence" value="ECO:0007669"/>
    <property type="project" value="UniProtKB-KW"/>
</dbReference>
<dbReference type="GO" id="GO:0005840">
    <property type="term" value="C:ribosome"/>
    <property type="evidence" value="ECO:0007669"/>
    <property type="project" value="UniProtKB-KW"/>
</dbReference>
<dbReference type="GO" id="GO:0019843">
    <property type="term" value="F:rRNA binding"/>
    <property type="evidence" value="ECO:0007669"/>
    <property type="project" value="UniProtKB-UniRule"/>
</dbReference>
<dbReference type="GO" id="GO:0003735">
    <property type="term" value="F:structural constituent of ribosome"/>
    <property type="evidence" value="ECO:0007669"/>
    <property type="project" value="InterPro"/>
</dbReference>
<dbReference type="GO" id="GO:0006412">
    <property type="term" value="P:translation"/>
    <property type="evidence" value="ECO:0007669"/>
    <property type="project" value="UniProtKB-UniRule"/>
</dbReference>
<dbReference type="FunFam" id="3.30.1370.30:FF:000002">
    <property type="entry name" value="30S ribosomal protein S8"/>
    <property type="match status" value="1"/>
</dbReference>
<dbReference type="FunFam" id="3.30.1490.10:FF:000001">
    <property type="entry name" value="30S ribosomal protein S8"/>
    <property type="match status" value="1"/>
</dbReference>
<dbReference type="Gene3D" id="3.30.1370.30">
    <property type="match status" value="1"/>
</dbReference>
<dbReference type="Gene3D" id="3.30.1490.10">
    <property type="match status" value="1"/>
</dbReference>
<dbReference type="HAMAP" id="MF_01302_B">
    <property type="entry name" value="Ribosomal_uS8_B"/>
    <property type="match status" value="1"/>
</dbReference>
<dbReference type="InterPro" id="IPR000630">
    <property type="entry name" value="Ribosomal_uS8"/>
</dbReference>
<dbReference type="InterPro" id="IPR035987">
    <property type="entry name" value="Ribosomal_uS8_sf"/>
</dbReference>
<dbReference type="NCBIfam" id="NF001109">
    <property type="entry name" value="PRK00136.1"/>
    <property type="match status" value="1"/>
</dbReference>
<dbReference type="PANTHER" id="PTHR11758">
    <property type="entry name" value="40S RIBOSOMAL PROTEIN S15A"/>
    <property type="match status" value="1"/>
</dbReference>
<dbReference type="Pfam" id="PF00410">
    <property type="entry name" value="Ribosomal_S8"/>
    <property type="match status" value="1"/>
</dbReference>
<dbReference type="SUPFAM" id="SSF56047">
    <property type="entry name" value="Ribosomal protein S8"/>
    <property type="match status" value="1"/>
</dbReference>
<evidence type="ECO:0000255" key="1">
    <source>
        <dbReference type="HAMAP-Rule" id="MF_01302"/>
    </source>
</evidence>
<evidence type="ECO:0000305" key="2"/>
<proteinExistence type="inferred from homology"/>
<accession>Q6ME50</accession>
<organism>
    <name type="scientific">Protochlamydia amoebophila (strain UWE25)</name>
    <dbReference type="NCBI Taxonomy" id="264201"/>
    <lineage>
        <taxon>Bacteria</taxon>
        <taxon>Pseudomonadati</taxon>
        <taxon>Chlamydiota</taxon>
        <taxon>Chlamydiia</taxon>
        <taxon>Parachlamydiales</taxon>
        <taxon>Parachlamydiaceae</taxon>
        <taxon>Candidatus Protochlamydia</taxon>
    </lineage>
</organism>
<name>RS8_PARUW</name>
<reference key="1">
    <citation type="journal article" date="2004" name="Science">
        <title>Illuminating the evolutionary history of chlamydiae.</title>
        <authorList>
            <person name="Horn M."/>
            <person name="Collingro A."/>
            <person name="Schmitz-Esser S."/>
            <person name="Beier C.L."/>
            <person name="Purkhold U."/>
            <person name="Fartmann B."/>
            <person name="Brandt P."/>
            <person name="Nyakatura G.J."/>
            <person name="Droege M."/>
            <person name="Frishman D."/>
            <person name="Rattei T."/>
            <person name="Mewes H.-W."/>
            <person name="Wagner M."/>
        </authorList>
    </citation>
    <scope>NUCLEOTIDE SEQUENCE [LARGE SCALE GENOMIC DNA]</scope>
    <source>
        <strain>UWE25</strain>
    </source>
</reference>
<keyword id="KW-1185">Reference proteome</keyword>
<keyword id="KW-0687">Ribonucleoprotein</keyword>
<keyword id="KW-0689">Ribosomal protein</keyword>
<keyword id="KW-0694">RNA-binding</keyword>
<keyword id="KW-0699">rRNA-binding</keyword>
<feature type="chain" id="PRO_0000126457" description="Small ribosomal subunit protein uS8">
    <location>
        <begin position="1"/>
        <end position="133"/>
    </location>
</feature>
<sequence>MVVSDPVADFLTRIRNGTKAQHRYVDVNWSKMKQTLAEILKNQGFIENYLVKVDEGQRGTIRIFLKYTNGRRPVIQGLKRISKPGLRKYVGHQDIPRFYGNMGLSIVSTSQGVMAGNEATQRGIGGELLCLIW</sequence>
<comment type="function">
    <text evidence="1">One of the primary rRNA binding proteins, it binds directly to 16S rRNA central domain where it helps coordinate assembly of the platform of the 30S subunit.</text>
</comment>
<comment type="subunit">
    <text evidence="1">Part of the 30S ribosomal subunit. Contacts proteins S5 and S12.</text>
</comment>
<comment type="similarity">
    <text evidence="1">Belongs to the universal ribosomal protein uS8 family.</text>
</comment>
<gene>
    <name evidence="1" type="primary">rpsH</name>
    <name type="ordered locus">pc0425</name>
</gene>